<keyword id="KW-0131">Cell cycle</keyword>
<keyword id="KW-0132">Cell division</keyword>
<keyword id="KW-0133">Cell shape</keyword>
<keyword id="KW-0961">Cell wall biogenesis/degradation</keyword>
<keyword id="KW-0963">Cytoplasm</keyword>
<keyword id="KW-0573">Peptidoglycan synthesis</keyword>
<keyword id="KW-0670">Pyruvate</keyword>
<keyword id="KW-0808">Transferase</keyword>
<name>MURA_ANASK</name>
<proteinExistence type="inferred from homology"/>
<evidence type="ECO:0000255" key="1">
    <source>
        <dbReference type="HAMAP-Rule" id="MF_00111"/>
    </source>
</evidence>
<comment type="function">
    <text evidence="1">Cell wall formation. Adds enolpyruvyl to UDP-N-acetylglucosamine.</text>
</comment>
<comment type="catalytic activity">
    <reaction evidence="1">
        <text>phosphoenolpyruvate + UDP-N-acetyl-alpha-D-glucosamine = UDP-N-acetyl-3-O-(1-carboxyvinyl)-alpha-D-glucosamine + phosphate</text>
        <dbReference type="Rhea" id="RHEA:18681"/>
        <dbReference type="ChEBI" id="CHEBI:43474"/>
        <dbReference type="ChEBI" id="CHEBI:57705"/>
        <dbReference type="ChEBI" id="CHEBI:58702"/>
        <dbReference type="ChEBI" id="CHEBI:68483"/>
        <dbReference type="EC" id="2.5.1.7"/>
    </reaction>
</comment>
<comment type="pathway">
    <text evidence="1">Cell wall biogenesis; peptidoglycan biosynthesis.</text>
</comment>
<comment type="subcellular location">
    <subcellularLocation>
        <location evidence="1">Cytoplasm</location>
    </subcellularLocation>
</comment>
<comment type="similarity">
    <text evidence="1">Belongs to the EPSP synthase family. MurA subfamily.</text>
</comment>
<reference key="1">
    <citation type="submission" date="2008-08" db="EMBL/GenBank/DDBJ databases">
        <title>Complete sequence of Anaeromyxobacter sp. K.</title>
        <authorList>
            <consortium name="US DOE Joint Genome Institute"/>
            <person name="Lucas S."/>
            <person name="Copeland A."/>
            <person name="Lapidus A."/>
            <person name="Glavina del Rio T."/>
            <person name="Dalin E."/>
            <person name="Tice H."/>
            <person name="Bruce D."/>
            <person name="Goodwin L."/>
            <person name="Pitluck S."/>
            <person name="Saunders E."/>
            <person name="Brettin T."/>
            <person name="Detter J.C."/>
            <person name="Han C."/>
            <person name="Larimer F."/>
            <person name="Land M."/>
            <person name="Hauser L."/>
            <person name="Kyrpides N."/>
            <person name="Ovchinnikiva G."/>
            <person name="Beliaev A."/>
        </authorList>
    </citation>
    <scope>NUCLEOTIDE SEQUENCE [LARGE SCALE GENOMIC DNA]</scope>
    <source>
        <strain>K</strain>
    </source>
</reference>
<organism>
    <name type="scientific">Anaeromyxobacter sp. (strain K)</name>
    <dbReference type="NCBI Taxonomy" id="447217"/>
    <lineage>
        <taxon>Bacteria</taxon>
        <taxon>Pseudomonadati</taxon>
        <taxon>Myxococcota</taxon>
        <taxon>Myxococcia</taxon>
        <taxon>Myxococcales</taxon>
        <taxon>Cystobacterineae</taxon>
        <taxon>Anaeromyxobacteraceae</taxon>
        <taxon>Anaeromyxobacter</taxon>
    </lineage>
</organism>
<gene>
    <name evidence="1" type="primary">murA</name>
    <name type="ordered locus">AnaeK_0392</name>
</gene>
<sequence>MDKIVIEGGVPLRGSVDVSGAKNAALPVIAAALLAEGEHEVRNVPDLADVRTLGKLLGHMGCEVARGEGDRRTVRLRVPAAVAPEAPYELVKTMRASVLVLGPLLARLGRARVSLPGGCAIGARPIDQHLKALTALGAEIRIEHGYVNATVPRGRLRGTVFTFDAQTVTGTENVMMAAALAEGETVLRNCAREPEVKDLGDALVAMGALVEGAGTDEIWIEGVPSLRPLSHAVIPDRIEAGTFLVAGALPGNDVTVRGCVAAHQEALVEKLRAVGAEVTKVEGGLRVVGDGRPRPVDVRTAPHPGFPTDMQAQLMVLLCLADGTSRITETVFENRFMHVQELIRLGAHVEVDGRVAMVKGVPELSGAPVMASDLRASAALVLAGLAASGTTEVLRVYHLDRGYERIEEKLAPLGARIRRVRG</sequence>
<dbReference type="EC" id="2.5.1.7" evidence="1"/>
<dbReference type="EMBL" id="CP001131">
    <property type="protein sequence ID" value="ACG71634.1"/>
    <property type="molecule type" value="Genomic_DNA"/>
</dbReference>
<dbReference type="RefSeq" id="WP_012524467.1">
    <property type="nucleotide sequence ID" value="NC_011145.1"/>
</dbReference>
<dbReference type="SMR" id="B4UAY6"/>
<dbReference type="KEGG" id="ank:AnaeK_0392"/>
<dbReference type="HOGENOM" id="CLU_027387_0_0_7"/>
<dbReference type="OrthoDB" id="9803760at2"/>
<dbReference type="UniPathway" id="UPA00219"/>
<dbReference type="Proteomes" id="UP000001871">
    <property type="component" value="Chromosome"/>
</dbReference>
<dbReference type="GO" id="GO:0005737">
    <property type="term" value="C:cytoplasm"/>
    <property type="evidence" value="ECO:0007669"/>
    <property type="project" value="UniProtKB-SubCell"/>
</dbReference>
<dbReference type="GO" id="GO:0008760">
    <property type="term" value="F:UDP-N-acetylglucosamine 1-carboxyvinyltransferase activity"/>
    <property type="evidence" value="ECO:0007669"/>
    <property type="project" value="UniProtKB-UniRule"/>
</dbReference>
<dbReference type="GO" id="GO:0051301">
    <property type="term" value="P:cell division"/>
    <property type="evidence" value="ECO:0007669"/>
    <property type="project" value="UniProtKB-KW"/>
</dbReference>
<dbReference type="GO" id="GO:0071555">
    <property type="term" value="P:cell wall organization"/>
    <property type="evidence" value="ECO:0007669"/>
    <property type="project" value="UniProtKB-KW"/>
</dbReference>
<dbReference type="GO" id="GO:0009252">
    <property type="term" value="P:peptidoglycan biosynthetic process"/>
    <property type="evidence" value="ECO:0007669"/>
    <property type="project" value="UniProtKB-UniRule"/>
</dbReference>
<dbReference type="GO" id="GO:0008360">
    <property type="term" value="P:regulation of cell shape"/>
    <property type="evidence" value="ECO:0007669"/>
    <property type="project" value="UniProtKB-KW"/>
</dbReference>
<dbReference type="GO" id="GO:0019277">
    <property type="term" value="P:UDP-N-acetylgalactosamine biosynthetic process"/>
    <property type="evidence" value="ECO:0007669"/>
    <property type="project" value="InterPro"/>
</dbReference>
<dbReference type="CDD" id="cd01555">
    <property type="entry name" value="UdpNAET"/>
    <property type="match status" value="1"/>
</dbReference>
<dbReference type="FunFam" id="3.65.10.10:FF:000001">
    <property type="entry name" value="UDP-N-acetylglucosamine 1-carboxyvinyltransferase"/>
    <property type="match status" value="1"/>
</dbReference>
<dbReference type="Gene3D" id="3.65.10.10">
    <property type="entry name" value="Enolpyruvate transferase domain"/>
    <property type="match status" value="2"/>
</dbReference>
<dbReference type="HAMAP" id="MF_00111">
    <property type="entry name" value="MurA"/>
    <property type="match status" value="1"/>
</dbReference>
<dbReference type="InterPro" id="IPR001986">
    <property type="entry name" value="Enolpyruvate_Tfrase_dom"/>
</dbReference>
<dbReference type="InterPro" id="IPR036968">
    <property type="entry name" value="Enolpyruvate_Tfrase_sf"/>
</dbReference>
<dbReference type="InterPro" id="IPR050068">
    <property type="entry name" value="MurA_subfamily"/>
</dbReference>
<dbReference type="InterPro" id="IPR013792">
    <property type="entry name" value="RNA3'P_cycl/enolpyr_Trfase_a/b"/>
</dbReference>
<dbReference type="InterPro" id="IPR005750">
    <property type="entry name" value="UDP_GlcNAc_COvinyl_MurA"/>
</dbReference>
<dbReference type="NCBIfam" id="TIGR01072">
    <property type="entry name" value="murA"/>
    <property type="match status" value="1"/>
</dbReference>
<dbReference type="NCBIfam" id="NF006873">
    <property type="entry name" value="PRK09369.1"/>
    <property type="match status" value="1"/>
</dbReference>
<dbReference type="PANTHER" id="PTHR43783">
    <property type="entry name" value="UDP-N-ACETYLGLUCOSAMINE 1-CARBOXYVINYLTRANSFERASE"/>
    <property type="match status" value="1"/>
</dbReference>
<dbReference type="PANTHER" id="PTHR43783:SF1">
    <property type="entry name" value="UDP-N-ACETYLGLUCOSAMINE 1-CARBOXYVINYLTRANSFERASE"/>
    <property type="match status" value="1"/>
</dbReference>
<dbReference type="Pfam" id="PF00275">
    <property type="entry name" value="EPSP_synthase"/>
    <property type="match status" value="1"/>
</dbReference>
<dbReference type="SUPFAM" id="SSF55205">
    <property type="entry name" value="EPT/RTPC-like"/>
    <property type="match status" value="1"/>
</dbReference>
<protein>
    <recommendedName>
        <fullName evidence="1">UDP-N-acetylglucosamine 1-carboxyvinyltransferase</fullName>
        <ecNumber evidence="1">2.5.1.7</ecNumber>
    </recommendedName>
    <alternativeName>
        <fullName evidence="1">Enoylpyruvate transferase</fullName>
    </alternativeName>
    <alternativeName>
        <fullName evidence="1">UDP-N-acetylglucosamine enolpyruvyl transferase</fullName>
        <shortName evidence="1">EPT</shortName>
    </alternativeName>
</protein>
<feature type="chain" id="PRO_1000094671" description="UDP-N-acetylglucosamine 1-carboxyvinyltransferase">
    <location>
        <begin position="1"/>
        <end position="422"/>
    </location>
</feature>
<feature type="active site" description="Proton donor" evidence="1">
    <location>
        <position position="119"/>
    </location>
</feature>
<feature type="binding site" evidence="1">
    <location>
        <begin position="22"/>
        <end position="23"/>
    </location>
    <ligand>
        <name>phosphoenolpyruvate</name>
        <dbReference type="ChEBI" id="CHEBI:58702"/>
    </ligand>
</feature>
<feature type="binding site" evidence="1">
    <location>
        <position position="95"/>
    </location>
    <ligand>
        <name>UDP-N-acetyl-alpha-D-glucosamine</name>
        <dbReference type="ChEBI" id="CHEBI:57705"/>
    </ligand>
</feature>
<feature type="binding site" evidence="1">
    <location>
        <begin position="124"/>
        <end position="128"/>
    </location>
    <ligand>
        <name>UDP-N-acetyl-alpha-D-glucosamine</name>
        <dbReference type="ChEBI" id="CHEBI:57705"/>
    </ligand>
</feature>
<feature type="binding site" evidence="1">
    <location>
        <position position="309"/>
    </location>
    <ligand>
        <name>UDP-N-acetyl-alpha-D-glucosamine</name>
        <dbReference type="ChEBI" id="CHEBI:57705"/>
    </ligand>
</feature>
<feature type="binding site" evidence="1">
    <location>
        <position position="331"/>
    </location>
    <ligand>
        <name>UDP-N-acetyl-alpha-D-glucosamine</name>
        <dbReference type="ChEBI" id="CHEBI:57705"/>
    </ligand>
</feature>
<feature type="modified residue" description="2-(S-cysteinyl)pyruvic acid O-phosphothioketal" evidence="1">
    <location>
        <position position="119"/>
    </location>
</feature>
<accession>B4UAY6</accession>